<comment type="function">
    <text evidence="1">Bifunctional serine/threonine kinase and phosphorylase involved in the regulation of the phosphoenolpyruvate synthase (PEPS) by catalyzing its phosphorylation/dephosphorylation.</text>
</comment>
<comment type="catalytic activity">
    <reaction evidence="1">
        <text>[pyruvate, water dikinase] + ADP = [pyruvate, water dikinase]-phosphate + AMP + H(+)</text>
        <dbReference type="Rhea" id="RHEA:46020"/>
        <dbReference type="Rhea" id="RHEA-COMP:11425"/>
        <dbReference type="Rhea" id="RHEA-COMP:11426"/>
        <dbReference type="ChEBI" id="CHEBI:15378"/>
        <dbReference type="ChEBI" id="CHEBI:43176"/>
        <dbReference type="ChEBI" id="CHEBI:68546"/>
        <dbReference type="ChEBI" id="CHEBI:456215"/>
        <dbReference type="ChEBI" id="CHEBI:456216"/>
        <dbReference type="EC" id="2.7.11.33"/>
    </reaction>
</comment>
<comment type="catalytic activity">
    <reaction evidence="1">
        <text>[pyruvate, water dikinase]-phosphate + phosphate + H(+) = [pyruvate, water dikinase] + diphosphate</text>
        <dbReference type="Rhea" id="RHEA:48580"/>
        <dbReference type="Rhea" id="RHEA-COMP:11425"/>
        <dbReference type="Rhea" id="RHEA-COMP:11426"/>
        <dbReference type="ChEBI" id="CHEBI:15378"/>
        <dbReference type="ChEBI" id="CHEBI:33019"/>
        <dbReference type="ChEBI" id="CHEBI:43176"/>
        <dbReference type="ChEBI" id="CHEBI:43474"/>
        <dbReference type="ChEBI" id="CHEBI:68546"/>
        <dbReference type="EC" id="2.7.4.28"/>
    </reaction>
</comment>
<comment type="similarity">
    <text evidence="1">Belongs to the pyruvate, phosphate/water dikinase regulatory protein family. PSRP subfamily.</text>
</comment>
<accession>B1JUD4</accession>
<name>PSRP_BURO0</name>
<gene>
    <name type="ordered locus">Bcenmc03_2023</name>
</gene>
<organism>
    <name type="scientific">Burkholderia orbicola (strain MC0-3)</name>
    <dbReference type="NCBI Taxonomy" id="406425"/>
    <lineage>
        <taxon>Bacteria</taxon>
        <taxon>Pseudomonadati</taxon>
        <taxon>Pseudomonadota</taxon>
        <taxon>Betaproteobacteria</taxon>
        <taxon>Burkholderiales</taxon>
        <taxon>Burkholderiaceae</taxon>
        <taxon>Burkholderia</taxon>
        <taxon>Burkholderia cepacia complex</taxon>
        <taxon>Burkholderia orbicola</taxon>
    </lineage>
</organism>
<feature type="chain" id="PRO_1000136457" description="Putative phosphoenolpyruvate synthase regulatory protein">
    <location>
        <begin position="1"/>
        <end position="271"/>
    </location>
</feature>
<feature type="binding site" evidence="1">
    <location>
        <begin position="151"/>
        <end position="158"/>
    </location>
    <ligand>
        <name>ADP</name>
        <dbReference type="ChEBI" id="CHEBI:456216"/>
    </ligand>
</feature>
<reference key="1">
    <citation type="submission" date="2008-02" db="EMBL/GenBank/DDBJ databases">
        <title>Complete sequence of chromosome 1 of Burkholderia cenocepacia MC0-3.</title>
        <authorList>
            <person name="Copeland A."/>
            <person name="Lucas S."/>
            <person name="Lapidus A."/>
            <person name="Barry K."/>
            <person name="Bruce D."/>
            <person name="Goodwin L."/>
            <person name="Glavina del Rio T."/>
            <person name="Dalin E."/>
            <person name="Tice H."/>
            <person name="Pitluck S."/>
            <person name="Chain P."/>
            <person name="Malfatti S."/>
            <person name="Shin M."/>
            <person name="Vergez L."/>
            <person name="Schmutz J."/>
            <person name="Larimer F."/>
            <person name="Land M."/>
            <person name="Hauser L."/>
            <person name="Kyrpides N."/>
            <person name="Mikhailova N."/>
            <person name="Tiedje J."/>
            <person name="Richardson P."/>
        </authorList>
    </citation>
    <scope>NUCLEOTIDE SEQUENCE [LARGE SCALE GENOMIC DNA]</scope>
    <source>
        <strain>MC0-3</strain>
    </source>
</reference>
<sequence length="271" mass="30575">MLPTVFIVSDGTGITAETFAHSILSQFDQKFRLVRVPFVDSLDKAYATVEKINEAAVHDGRRAIVFTTLVDSESNDIVKRSNALVLDMFQRFVEPLEQELELKSSHAMGRGHQNADTEEYKTRIEAINFSLAHDDGQSNRNLSEADVILVGVSRSGKTPTSLYLAMQYGVKAANYPLIPEDFERGKLPSALAPYSEKLFGLSIDPQRLSEIRNERRPGSKYAAPENCRYEINEAEAMMRREGIKWLSSTHKSIEEIATTILQEIRLDRQSY</sequence>
<evidence type="ECO:0000255" key="1">
    <source>
        <dbReference type="HAMAP-Rule" id="MF_01062"/>
    </source>
</evidence>
<protein>
    <recommendedName>
        <fullName evidence="1">Putative phosphoenolpyruvate synthase regulatory protein</fullName>
        <shortName evidence="1">PEP synthase regulatory protein</shortName>
        <shortName evidence="1">PSRP</shortName>
        <ecNumber evidence="1">2.7.11.33</ecNumber>
        <ecNumber evidence="1">2.7.4.28</ecNumber>
    </recommendedName>
    <alternativeName>
        <fullName evidence="1">Pyruvate, water dikinase regulatory protein</fullName>
    </alternativeName>
</protein>
<keyword id="KW-0418">Kinase</keyword>
<keyword id="KW-0547">Nucleotide-binding</keyword>
<keyword id="KW-0723">Serine/threonine-protein kinase</keyword>
<keyword id="KW-0808">Transferase</keyword>
<proteinExistence type="inferred from homology"/>
<dbReference type="EC" id="2.7.11.33" evidence="1"/>
<dbReference type="EC" id="2.7.4.28" evidence="1"/>
<dbReference type="EMBL" id="CP000958">
    <property type="protein sequence ID" value="ACA91184.1"/>
    <property type="molecule type" value="Genomic_DNA"/>
</dbReference>
<dbReference type="RefSeq" id="WP_011549549.1">
    <property type="nucleotide sequence ID" value="NC_010508.1"/>
</dbReference>
<dbReference type="SMR" id="B1JUD4"/>
<dbReference type="GeneID" id="83048800"/>
<dbReference type="KEGG" id="bcm:Bcenmc03_2023"/>
<dbReference type="HOGENOM" id="CLU_046206_1_0_4"/>
<dbReference type="Proteomes" id="UP000002169">
    <property type="component" value="Chromosome 1"/>
</dbReference>
<dbReference type="GO" id="GO:0043531">
    <property type="term" value="F:ADP binding"/>
    <property type="evidence" value="ECO:0007669"/>
    <property type="project" value="UniProtKB-UniRule"/>
</dbReference>
<dbReference type="GO" id="GO:0005524">
    <property type="term" value="F:ATP binding"/>
    <property type="evidence" value="ECO:0007669"/>
    <property type="project" value="InterPro"/>
</dbReference>
<dbReference type="GO" id="GO:0016776">
    <property type="term" value="F:phosphotransferase activity, phosphate group as acceptor"/>
    <property type="evidence" value="ECO:0007669"/>
    <property type="project" value="UniProtKB-UniRule"/>
</dbReference>
<dbReference type="GO" id="GO:0004674">
    <property type="term" value="F:protein serine/threonine kinase activity"/>
    <property type="evidence" value="ECO:0007669"/>
    <property type="project" value="UniProtKB-UniRule"/>
</dbReference>
<dbReference type="HAMAP" id="MF_01062">
    <property type="entry name" value="PSRP"/>
    <property type="match status" value="1"/>
</dbReference>
<dbReference type="InterPro" id="IPR005177">
    <property type="entry name" value="Kinase-pyrophosphorylase"/>
</dbReference>
<dbReference type="InterPro" id="IPR026530">
    <property type="entry name" value="PSRP"/>
</dbReference>
<dbReference type="NCBIfam" id="NF003742">
    <property type="entry name" value="PRK05339.1"/>
    <property type="match status" value="1"/>
</dbReference>
<dbReference type="PANTHER" id="PTHR31756">
    <property type="entry name" value="PYRUVATE, PHOSPHATE DIKINASE REGULATORY PROTEIN 1, CHLOROPLASTIC"/>
    <property type="match status" value="1"/>
</dbReference>
<dbReference type="PANTHER" id="PTHR31756:SF3">
    <property type="entry name" value="PYRUVATE, PHOSPHATE DIKINASE REGULATORY PROTEIN 1, CHLOROPLASTIC"/>
    <property type="match status" value="1"/>
</dbReference>
<dbReference type="Pfam" id="PF03618">
    <property type="entry name" value="Kinase-PPPase"/>
    <property type="match status" value="1"/>
</dbReference>